<dbReference type="EMBL" id="BC071020">
    <property type="protein sequence ID" value="AAH71020.1"/>
    <property type="molecule type" value="mRNA"/>
</dbReference>
<dbReference type="RefSeq" id="NP_001085035.1">
    <property type="nucleotide sequence ID" value="NM_001091566.1"/>
</dbReference>
<dbReference type="SMR" id="Q6IR80"/>
<dbReference type="DNASU" id="432102"/>
<dbReference type="GeneID" id="432102"/>
<dbReference type="KEGG" id="xla:432102"/>
<dbReference type="AGR" id="Xenbase:XB-GENE-959001"/>
<dbReference type="CTD" id="432102"/>
<dbReference type="Xenbase" id="XB-GENE-959001">
    <property type="gene designation" value="kics2.L"/>
</dbReference>
<dbReference type="OrthoDB" id="18134at2759"/>
<dbReference type="Proteomes" id="UP000186698">
    <property type="component" value="Chromosome 3L"/>
</dbReference>
<dbReference type="Bgee" id="432102">
    <property type="expression patterns" value="Expressed in egg cell and 19 other cell types or tissues"/>
</dbReference>
<dbReference type="GO" id="GO:0140007">
    <property type="term" value="C:KICSTOR complex"/>
    <property type="evidence" value="ECO:0000250"/>
    <property type="project" value="UniProtKB"/>
</dbReference>
<dbReference type="GO" id="GO:0005765">
    <property type="term" value="C:lysosomal membrane"/>
    <property type="evidence" value="ECO:0007669"/>
    <property type="project" value="UniProtKB-SubCell"/>
</dbReference>
<dbReference type="GO" id="GO:0034198">
    <property type="term" value="P:cellular response to amino acid starvation"/>
    <property type="evidence" value="ECO:0000250"/>
    <property type="project" value="UniProtKB"/>
</dbReference>
<dbReference type="GO" id="GO:0042149">
    <property type="term" value="P:cellular response to glucose starvation"/>
    <property type="evidence" value="ECO:0000250"/>
    <property type="project" value="UniProtKB"/>
</dbReference>
<dbReference type="GO" id="GO:1904262">
    <property type="term" value="P:negative regulation of TORC1 signaling"/>
    <property type="evidence" value="ECO:0000250"/>
    <property type="project" value="UniProtKB"/>
</dbReference>
<dbReference type="GO" id="GO:0061462">
    <property type="term" value="P:protein localization to lysosome"/>
    <property type="evidence" value="ECO:0000250"/>
    <property type="project" value="UniProtKB"/>
</dbReference>
<dbReference type="FunFam" id="1.10.3450.30:FF:000001">
    <property type="entry name" value="KICSTOR complex protein C12orf66 homolog"/>
    <property type="match status" value="1"/>
</dbReference>
<dbReference type="Gene3D" id="1.10.3450.30">
    <property type="match status" value="1"/>
</dbReference>
<dbReference type="InterPro" id="IPR038060">
    <property type="entry name" value="C12orf66-like_central_sf"/>
</dbReference>
<dbReference type="InterPro" id="IPR018544">
    <property type="entry name" value="KICS_2"/>
</dbReference>
<dbReference type="PANTHER" id="PTHR31581">
    <property type="entry name" value="KICSTOR COMPLEX PROTEIN C12ORF66"/>
    <property type="match status" value="1"/>
</dbReference>
<dbReference type="PANTHER" id="PTHR31581:SF1">
    <property type="entry name" value="KICSTOR SUBUNIT 2"/>
    <property type="match status" value="1"/>
</dbReference>
<dbReference type="Pfam" id="PF09404">
    <property type="entry name" value="C12orf66_like"/>
    <property type="match status" value="1"/>
</dbReference>
<dbReference type="SUPFAM" id="SSF160651">
    <property type="entry name" value="FLJ32549 C-terminal domain-like"/>
    <property type="match status" value="1"/>
</dbReference>
<dbReference type="SUPFAM" id="SSF158548">
    <property type="entry name" value="FLJ32549 domain-like"/>
    <property type="match status" value="1"/>
</dbReference>
<accession>Q6IR80</accession>
<gene>
    <name type="primary">kics2</name>
</gene>
<sequence length="442" mass="50525">MIPPTSAQVTAEQNVLQTFFSHLGNFSYDKAKDHVEKEKEGNKSAGASWSLMLAALAHLAAAQKAYHSMSFLGQKQGGQLFFSRKDSIRTNYTSLYNELKKVVTTGRNAVGGTAPHLEELLSHLSEQLCYFVQAHMEIADFYEKMYTLSSQKFINAEELVKILEAILKKYSSRFHHPTLSPLESGFQLEVDVLAHLLKAQFLIYEWKFLPALVNLHNAHTKLQTWGQIFEKQKETKKHLFGGQSQKVAQPPHLFLWLMKFKNLLLAKFSFYFHEALSRQTSEMKTLTAKTNPDYFGKISSFIRKYDAVNVSLIYDTRGSENFQGHGYHHPDSYREAPKGMDQYPAVVSLPNDRPIMHWPNVIMIMTDKSADLNTLEKVVHFYDDKVQSTYFLTRPEPNFTIVVIFESKKSERDSHFTSFLNELSQSLKGSRAFASLKPGSKV</sequence>
<evidence type="ECO:0000250" key="1">
    <source>
        <dbReference type="UniProtKB" id="Q96MD2"/>
    </source>
</evidence>
<evidence type="ECO:0000305" key="2"/>
<organism>
    <name type="scientific">Xenopus laevis</name>
    <name type="common">African clawed frog</name>
    <dbReference type="NCBI Taxonomy" id="8355"/>
    <lineage>
        <taxon>Eukaryota</taxon>
        <taxon>Metazoa</taxon>
        <taxon>Chordata</taxon>
        <taxon>Craniata</taxon>
        <taxon>Vertebrata</taxon>
        <taxon>Euteleostomi</taxon>
        <taxon>Amphibia</taxon>
        <taxon>Batrachia</taxon>
        <taxon>Anura</taxon>
        <taxon>Pipoidea</taxon>
        <taxon>Pipidae</taxon>
        <taxon>Xenopodinae</taxon>
        <taxon>Xenopus</taxon>
        <taxon>Xenopus</taxon>
    </lineage>
</organism>
<keyword id="KW-0458">Lysosome</keyword>
<keyword id="KW-0472">Membrane</keyword>
<keyword id="KW-1185">Reference proteome</keyword>
<protein>
    <recommendedName>
        <fullName>KICSTOR subunit 2</fullName>
    </recommendedName>
</protein>
<reference key="1">
    <citation type="submission" date="2004-05" db="EMBL/GenBank/DDBJ databases">
        <authorList>
            <consortium name="NIH - Xenopus Gene Collection (XGC) project"/>
        </authorList>
    </citation>
    <scope>NUCLEOTIDE SEQUENCE [LARGE SCALE MRNA]</scope>
    <source>
        <tissue>Embryo</tissue>
    </source>
</reference>
<proteinExistence type="evidence at transcript level"/>
<feature type="chain" id="PRO_0000321905" description="KICSTOR subunit 2">
    <location>
        <begin position="1"/>
        <end position="442"/>
    </location>
</feature>
<name>KICS2_XENLA</name>
<comment type="function">
    <text evidence="1">As part of the KICSTOR complex may function in the amino acid-sensing branch of the TORC1 signaling pathway.</text>
</comment>
<comment type="subunit">
    <text evidence="1">May be part of the KICSTOR complex.</text>
</comment>
<comment type="subcellular location">
    <subcellularLocation>
        <location evidence="1">Lysosome membrane</location>
    </subcellularLocation>
</comment>
<comment type="similarity">
    <text evidence="2">Belongs to the KICS2 family.</text>
</comment>